<keyword id="KW-0217">Developmental protein</keyword>
<keyword id="KW-1015">Disulfide bond</keyword>
<keyword id="KW-0325">Glycoprotein</keyword>
<keyword id="KW-0424">Laminin EGF-like domain</keyword>
<keyword id="KW-0524">Neurogenesis</keyword>
<keyword id="KW-1185">Reference proteome</keyword>
<keyword id="KW-0677">Repeat</keyword>
<keyword id="KW-0964">Secreted</keyword>
<keyword id="KW-0732">Signal</keyword>
<feature type="signal peptide" evidence="2">
    <location>
        <begin position="1"/>
        <end position="34"/>
    </location>
</feature>
<feature type="chain" id="PRO_0000320576" description="Netrin-5">
    <location>
        <begin position="35"/>
        <end position="452"/>
    </location>
</feature>
<feature type="domain" description="Laminin EGF-like 1" evidence="4">
    <location>
        <begin position="173"/>
        <end position="227"/>
    </location>
</feature>
<feature type="domain" description="Laminin EGF-like 2" evidence="4">
    <location>
        <begin position="228"/>
        <end position="277"/>
    </location>
</feature>
<feature type="domain" description="NTR" evidence="3">
    <location>
        <begin position="298"/>
        <end position="438"/>
    </location>
</feature>
<feature type="glycosylation site" description="N-linked (GlcNAc...) asparagine" evidence="2">
    <location>
        <position position="303"/>
    </location>
</feature>
<feature type="disulfide bond" evidence="1">
    <location>
        <begin position="173"/>
        <end position="182"/>
    </location>
</feature>
<feature type="disulfide bond" evidence="1">
    <location>
        <begin position="175"/>
        <end position="191"/>
    </location>
</feature>
<feature type="disulfide bond" evidence="1">
    <location>
        <begin position="193"/>
        <end position="202"/>
    </location>
</feature>
<feature type="disulfide bond" evidence="1">
    <location>
        <begin position="205"/>
        <end position="225"/>
    </location>
</feature>
<feature type="disulfide bond" evidence="1">
    <location>
        <begin position="228"/>
        <end position="240"/>
    </location>
</feature>
<feature type="disulfide bond" evidence="1">
    <location>
        <begin position="230"/>
        <end position="247"/>
    </location>
</feature>
<feature type="disulfide bond" evidence="1">
    <location>
        <begin position="249"/>
        <end position="258"/>
    </location>
</feature>
<feature type="disulfide bond" evidence="1">
    <location>
        <begin position="261"/>
        <end position="275"/>
    </location>
</feature>
<feature type="disulfide bond" evidence="1">
    <location>
        <begin position="298"/>
        <end position="376"/>
    </location>
</feature>
<feature type="disulfide bond" evidence="1">
    <location>
        <begin position="302"/>
        <end position="378"/>
    </location>
</feature>
<feature type="disulfide bond" evidence="1">
    <location>
        <begin position="317"/>
        <end position="438"/>
    </location>
</feature>
<reference key="1">
    <citation type="journal article" date="2005" name="Science">
        <title>The transcriptional landscape of the mammalian genome.</title>
        <authorList>
            <person name="Carninci P."/>
            <person name="Kasukawa T."/>
            <person name="Katayama S."/>
            <person name="Gough J."/>
            <person name="Frith M.C."/>
            <person name="Maeda N."/>
            <person name="Oyama R."/>
            <person name="Ravasi T."/>
            <person name="Lenhard B."/>
            <person name="Wells C."/>
            <person name="Kodzius R."/>
            <person name="Shimokawa K."/>
            <person name="Bajic V.B."/>
            <person name="Brenner S.E."/>
            <person name="Batalov S."/>
            <person name="Forrest A.R."/>
            <person name="Zavolan M."/>
            <person name="Davis M.J."/>
            <person name="Wilming L.G."/>
            <person name="Aidinis V."/>
            <person name="Allen J.E."/>
            <person name="Ambesi-Impiombato A."/>
            <person name="Apweiler R."/>
            <person name="Aturaliya R.N."/>
            <person name="Bailey T.L."/>
            <person name="Bansal M."/>
            <person name="Baxter L."/>
            <person name="Beisel K.W."/>
            <person name="Bersano T."/>
            <person name="Bono H."/>
            <person name="Chalk A.M."/>
            <person name="Chiu K.P."/>
            <person name="Choudhary V."/>
            <person name="Christoffels A."/>
            <person name="Clutterbuck D.R."/>
            <person name="Crowe M.L."/>
            <person name="Dalla E."/>
            <person name="Dalrymple B.P."/>
            <person name="de Bono B."/>
            <person name="Della Gatta G."/>
            <person name="di Bernardo D."/>
            <person name="Down T."/>
            <person name="Engstrom P."/>
            <person name="Fagiolini M."/>
            <person name="Faulkner G."/>
            <person name="Fletcher C.F."/>
            <person name="Fukushima T."/>
            <person name="Furuno M."/>
            <person name="Futaki S."/>
            <person name="Gariboldi M."/>
            <person name="Georgii-Hemming P."/>
            <person name="Gingeras T.R."/>
            <person name="Gojobori T."/>
            <person name="Green R.E."/>
            <person name="Gustincich S."/>
            <person name="Harbers M."/>
            <person name="Hayashi Y."/>
            <person name="Hensch T.K."/>
            <person name="Hirokawa N."/>
            <person name="Hill D."/>
            <person name="Huminiecki L."/>
            <person name="Iacono M."/>
            <person name="Ikeo K."/>
            <person name="Iwama A."/>
            <person name="Ishikawa T."/>
            <person name="Jakt M."/>
            <person name="Kanapin A."/>
            <person name="Katoh M."/>
            <person name="Kawasawa Y."/>
            <person name="Kelso J."/>
            <person name="Kitamura H."/>
            <person name="Kitano H."/>
            <person name="Kollias G."/>
            <person name="Krishnan S.P."/>
            <person name="Kruger A."/>
            <person name="Kummerfeld S.K."/>
            <person name="Kurochkin I.V."/>
            <person name="Lareau L.F."/>
            <person name="Lazarevic D."/>
            <person name="Lipovich L."/>
            <person name="Liu J."/>
            <person name="Liuni S."/>
            <person name="McWilliam S."/>
            <person name="Madan Babu M."/>
            <person name="Madera M."/>
            <person name="Marchionni L."/>
            <person name="Matsuda H."/>
            <person name="Matsuzawa S."/>
            <person name="Miki H."/>
            <person name="Mignone F."/>
            <person name="Miyake S."/>
            <person name="Morris K."/>
            <person name="Mottagui-Tabar S."/>
            <person name="Mulder N."/>
            <person name="Nakano N."/>
            <person name="Nakauchi H."/>
            <person name="Ng P."/>
            <person name="Nilsson R."/>
            <person name="Nishiguchi S."/>
            <person name="Nishikawa S."/>
            <person name="Nori F."/>
            <person name="Ohara O."/>
            <person name="Okazaki Y."/>
            <person name="Orlando V."/>
            <person name="Pang K.C."/>
            <person name="Pavan W.J."/>
            <person name="Pavesi G."/>
            <person name="Pesole G."/>
            <person name="Petrovsky N."/>
            <person name="Piazza S."/>
            <person name="Reed J."/>
            <person name="Reid J.F."/>
            <person name="Ring B.Z."/>
            <person name="Ringwald M."/>
            <person name="Rost B."/>
            <person name="Ruan Y."/>
            <person name="Salzberg S.L."/>
            <person name="Sandelin A."/>
            <person name="Schneider C."/>
            <person name="Schoenbach C."/>
            <person name="Sekiguchi K."/>
            <person name="Semple C.A."/>
            <person name="Seno S."/>
            <person name="Sessa L."/>
            <person name="Sheng Y."/>
            <person name="Shibata Y."/>
            <person name="Shimada H."/>
            <person name="Shimada K."/>
            <person name="Silva D."/>
            <person name="Sinclair B."/>
            <person name="Sperling S."/>
            <person name="Stupka E."/>
            <person name="Sugiura K."/>
            <person name="Sultana R."/>
            <person name="Takenaka Y."/>
            <person name="Taki K."/>
            <person name="Tammoja K."/>
            <person name="Tan S.L."/>
            <person name="Tang S."/>
            <person name="Taylor M.S."/>
            <person name="Tegner J."/>
            <person name="Teichmann S.A."/>
            <person name="Ueda H.R."/>
            <person name="van Nimwegen E."/>
            <person name="Verardo R."/>
            <person name="Wei C.L."/>
            <person name="Yagi K."/>
            <person name="Yamanishi H."/>
            <person name="Zabarovsky E."/>
            <person name="Zhu S."/>
            <person name="Zimmer A."/>
            <person name="Hide W."/>
            <person name="Bult C."/>
            <person name="Grimmond S.M."/>
            <person name="Teasdale R.D."/>
            <person name="Liu E.T."/>
            <person name="Brusic V."/>
            <person name="Quackenbush J."/>
            <person name="Wahlestedt C."/>
            <person name="Mattick J.S."/>
            <person name="Hume D.A."/>
            <person name="Kai C."/>
            <person name="Sasaki D."/>
            <person name="Tomaru Y."/>
            <person name="Fukuda S."/>
            <person name="Kanamori-Katayama M."/>
            <person name="Suzuki M."/>
            <person name="Aoki J."/>
            <person name="Arakawa T."/>
            <person name="Iida J."/>
            <person name="Imamura K."/>
            <person name="Itoh M."/>
            <person name="Kato T."/>
            <person name="Kawaji H."/>
            <person name="Kawagashira N."/>
            <person name="Kawashima T."/>
            <person name="Kojima M."/>
            <person name="Kondo S."/>
            <person name="Konno H."/>
            <person name="Nakano K."/>
            <person name="Ninomiya N."/>
            <person name="Nishio T."/>
            <person name="Okada M."/>
            <person name="Plessy C."/>
            <person name="Shibata K."/>
            <person name="Shiraki T."/>
            <person name="Suzuki S."/>
            <person name="Tagami M."/>
            <person name="Waki K."/>
            <person name="Watahiki A."/>
            <person name="Okamura-Oho Y."/>
            <person name="Suzuki H."/>
            <person name="Kawai J."/>
            <person name="Hayashizaki Y."/>
        </authorList>
    </citation>
    <scope>NUCLEOTIDE SEQUENCE [LARGE SCALE MRNA]</scope>
    <source>
        <strain>C57BL/6J</strain>
        <tissue>Embryonic head</tissue>
    </source>
</reference>
<reference key="2">
    <citation type="journal article" date="2009" name="PLoS Biol.">
        <title>Lineage-specific biology revealed by a finished genome assembly of the mouse.</title>
        <authorList>
            <person name="Church D.M."/>
            <person name="Goodstadt L."/>
            <person name="Hillier L.W."/>
            <person name="Zody M.C."/>
            <person name="Goldstein S."/>
            <person name="She X."/>
            <person name="Bult C.J."/>
            <person name="Agarwala R."/>
            <person name="Cherry J.L."/>
            <person name="DiCuccio M."/>
            <person name="Hlavina W."/>
            <person name="Kapustin Y."/>
            <person name="Meric P."/>
            <person name="Maglott D."/>
            <person name="Birtle Z."/>
            <person name="Marques A.C."/>
            <person name="Graves T."/>
            <person name="Zhou S."/>
            <person name="Teague B."/>
            <person name="Potamousis K."/>
            <person name="Churas C."/>
            <person name="Place M."/>
            <person name="Herschleb J."/>
            <person name="Runnheim R."/>
            <person name="Forrest D."/>
            <person name="Amos-Landgraf J."/>
            <person name="Schwartz D.C."/>
            <person name="Cheng Z."/>
            <person name="Lindblad-Toh K."/>
            <person name="Eichler E.E."/>
            <person name="Ponting C.P."/>
        </authorList>
    </citation>
    <scope>NUCLEOTIDE SEQUENCE [LARGE SCALE GENOMIC DNA]</scope>
    <source>
        <strain>C57BL/6J</strain>
    </source>
</reference>
<reference key="3">
    <citation type="journal article" date="2004" name="Genome Res.">
        <title>The status, quality, and expansion of the NIH full-length cDNA project: the Mammalian Gene Collection (MGC).</title>
        <authorList>
            <consortium name="The MGC Project Team"/>
        </authorList>
    </citation>
    <scope>NUCLEOTIDE SEQUENCE [LARGE SCALE MRNA]</scope>
</reference>
<reference key="4">
    <citation type="journal article" date="2016" name="Front. Mol. Neurosci.">
        <title>Analysis of expression pattern and genetic deletion of netrin5 in the developing mouse.</title>
        <authorList>
            <person name="Garrett A.M."/>
            <person name="Jucius T.J."/>
            <person name="Sigaud L.P."/>
            <person name="Tang F.L."/>
            <person name="Xiong W.C."/>
            <person name="Ackerman S.L."/>
            <person name="Burgess R.W."/>
        </authorList>
    </citation>
    <scope>DEVELOPMENTAL STAGE</scope>
    <scope>DISRUPTION PHENOTYPE</scope>
    <scope>FUNCTION</scope>
</reference>
<comment type="function">
    <text evidence="5">Plays a role in neurogenesis. Prevents motor neuron cell body migration out of the neural tube.</text>
</comment>
<comment type="subcellular location">
    <subcellularLocation>
        <location evidence="2">Secreted</location>
    </subcellularLocation>
</comment>
<comment type="developmental stage">
    <text evidence="5">Detected in boundary cap cells at 11.5 dpc, expression is strongest between 15.5 and 17.5 dpc and is barely detectable at birth.</text>
</comment>
<comment type="disruption phenotype">
    <text evidence="5">Deficient mice exhibit ectopic motor neurons that migrate out of the ventral horn and into the motor roots.</text>
</comment>
<comment type="sequence caution" evidence="6">
    <conflict type="frameshift">
        <sequence resource="EMBL-CDS" id="BAE25222"/>
    </conflict>
</comment>
<accession>Q3UQ22</accession>
<accession>B9EKG6</accession>
<name>NET5_MOUSE</name>
<proteinExistence type="evidence at transcript level"/>
<dbReference type="EMBL" id="AK142898">
    <property type="protein sequence ID" value="BAE25222.1"/>
    <property type="status" value="ALT_FRAME"/>
    <property type="molecule type" value="mRNA"/>
</dbReference>
<dbReference type="EMBL" id="AC167242">
    <property type="status" value="NOT_ANNOTATED_CDS"/>
    <property type="molecule type" value="Genomic_DNA"/>
</dbReference>
<dbReference type="EMBL" id="BC150901">
    <property type="protein sequence ID" value="AAI50902.1"/>
    <property type="molecule type" value="mRNA"/>
</dbReference>
<dbReference type="CCDS" id="CCDS39957.1"/>
<dbReference type="RefSeq" id="NP_001028528.2">
    <property type="nucleotide sequence ID" value="NM_001033356.4"/>
</dbReference>
<dbReference type="RefSeq" id="NP_001276622.1">
    <property type="nucleotide sequence ID" value="NM_001289693.1"/>
</dbReference>
<dbReference type="SMR" id="Q3UQ22"/>
<dbReference type="BioGRID" id="232594">
    <property type="interactions" value="1"/>
</dbReference>
<dbReference type="FunCoup" id="Q3UQ22">
    <property type="interactions" value="2"/>
</dbReference>
<dbReference type="STRING" id="10090.ENSMUSP00000103371"/>
<dbReference type="GlyCosmos" id="Q3UQ22">
    <property type="glycosylation" value="1 site, No reported glycans"/>
</dbReference>
<dbReference type="GlyGen" id="Q3UQ22">
    <property type="glycosylation" value="1 site, 1 N-linked glycan (1 site)"/>
</dbReference>
<dbReference type="iPTMnet" id="Q3UQ22"/>
<dbReference type="PhosphoSitePlus" id="Q3UQ22"/>
<dbReference type="PaxDb" id="10090-ENSMUSP00000103371"/>
<dbReference type="Antibodypedia" id="31764">
    <property type="antibodies" value="47 antibodies from 14 providers"/>
</dbReference>
<dbReference type="Ensembl" id="ENSMUST00000107742.11">
    <property type="protein sequence ID" value="ENSMUSP00000103371.2"/>
    <property type="gene ID" value="ENSMUSG00000070564.16"/>
</dbReference>
<dbReference type="GeneID" id="243967"/>
<dbReference type="KEGG" id="mmu:243967"/>
<dbReference type="UCSC" id="uc009gwp.2">
    <property type="organism name" value="mouse"/>
</dbReference>
<dbReference type="AGR" id="MGI:2685330"/>
<dbReference type="CTD" id="126147"/>
<dbReference type="MGI" id="MGI:2685330">
    <property type="gene designation" value="Ntn5"/>
</dbReference>
<dbReference type="VEuPathDB" id="HostDB:ENSMUSG00000070564"/>
<dbReference type="eggNOG" id="KOG3512">
    <property type="taxonomic scope" value="Eukaryota"/>
</dbReference>
<dbReference type="GeneTree" id="ENSGT00940000161874"/>
<dbReference type="HOGENOM" id="CLU_018213_0_0_1"/>
<dbReference type="InParanoid" id="Q3UQ22"/>
<dbReference type="OMA" id="DPCYDPQ"/>
<dbReference type="OrthoDB" id="5984158at2759"/>
<dbReference type="PhylomeDB" id="Q3UQ22"/>
<dbReference type="TreeFam" id="TF352481"/>
<dbReference type="BioGRID-ORCS" id="243967">
    <property type="hits" value="2 hits in 76 CRISPR screens"/>
</dbReference>
<dbReference type="PRO" id="PR:Q3UQ22"/>
<dbReference type="Proteomes" id="UP000000589">
    <property type="component" value="Chromosome 7"/>
</dbReference>
<dbReference type="RNAct" id="Q3UQ22">
    <property type="molecule type" value="protein"/>
</dbReference>
<dbReference type="Bgee" id="ENSMUSG00000070564">
    <property type="expression patterns" value="Expressed in gastrula and 36 other cell types or tissues"/>
</dbReference>
<dbReference type="ExpressionAtlas" id="Q3UQ22">
    <property type="expression patterns" value="baseline and differential"/>
</dbReference>
<dbReference type="GO" id="GO:0005576">
    <property type="term" value="C:extracellular region"/>
    <property type="evidence" value="ECO:0007669"/>
    <property type="project" value="UniProtKB-SubCell"/>
</dbReference>
<dbReference type="GO" id="GO:0022008">
    <property type="term" value="P:neurogenesis"/>
    <property type="evidence" value="ECO:0000315"/>
    <property type="project" value="UniProtKB"/>
</dbReference>
<dbReference type="CDD" id="cd00055">
    <property type="entry name" value="EGF_Lam"/>
    <property type="match status" value="2"/>
</dbReference>
<dbReference type="CDD" id="cd03579">
    <property type="entry name" value="NTR_netrin-1_like"/>
    <property type="match status" value="1"/>
</dbReference>
<dbReference type="FunFam" id="2.10.25.10:FF:000048">
    <property type="entry name" value="Netrin 3"/>
    <property type="match status" value="1"/>
</dbReference>
<dbReference type="FunFam" id="2.40.50.120:FF:000020">
    <property type="entry name" value="Netrin 5"/>
    <property type="match status" value="1"/>
</dbReference>
<dbReference type="Gene3D" id="2.40.50.120">
    <property type="match status" value="1"/>
</dbReference>
<dbReference type="Gene3D" id="2.10.25.10">
    <property type="entry name" value="Laminin"/>
    <property type="match status" value="2"/>
</dbReference>
<dbReference type="InterPro" id="IPR050440">
    <property type="entry name" value="Laminin/Netrin_ECM"/>
</dbReference>
<dbReference type="InterPro" id="IPR002049">
    <property type="entry name" value="LE_dom"/>
</dbReference>
<dbReference type="InterPro" id="IPR001134">
    <property type="entry name" value="Netrin_domain"/>
</dbReference>
<dbReference type="InterPro" id="IPR018933">
    <property type="entry name" value="Netrin_module_non-TIMP"/>
</dbReference>
<dbReference type="InterPro" id="IPR008993">
    <property type="entry name" value="TIMP-like_OB-fold"/>
</dbReference>
<dbReference type="PANTHER" id="PTHR10574:SF262">
    <property type="entry name" value="NETRIN-5"/>
    <property type="match status" value="1"/>
</dbReference>
<dbReference type="PANTHER" id="PTHR10574">
    <property type="entry name" value="NETRIN/LAMININ-RELATED"/>
    <property type="match status" value="1"/>
</dbReference>
<dbReference type="Pfam" id="PF00053">
    <property type="entry name" value="EGF_laminin"/>
    <property type="match status" value="2"/>
</dbReference>
<dbReference type="Pfam" id="PF01759">
    <property type="entry name" value="NTR"/>
    <property type="match status" value="1"/>
</dbReference>
<dbReference type="SMART" id="SM00643">
    <property type="entry name" value="C345C"/>
    <property type="match status" value="1"/>
</dbReference>
<dbReference type="SMART" id="SM00180">
    <property type="entry name" value="EGF_Lam"/>
    <property type="match status" value="2"/>
</dbReference>
<dbReference type="SUPFAM" id="SSF57196">
    <property type="entry name" value="EGF/Laminin"/>
    <property type="match status" value="2"/>
</dbReference>
<dbReference type="SUPFAM" id="SSF50242">
    <property type="entry name" value="TIMP-like"/>
    <property type="match status" value="1"/>
</dbReference>
<dbReference type="PROSITE" id="PS00022">
    <property type="entry name" value="EGF_1"/>
    <property type="match status" value="2"/>
</dbReference>
<dbReference type="PROSITE" id="PS01248">
    <property type="entry name" value="EGF_LAM_1"/>
    <property type="match status" value="1"/>
</dbReference>
<dbReference type="PROSITE" id="PS50027">
    <property type="entry name" value="EGF_LAM_2"/>
    <property type="match status" value="2"/>
</dbReference>
<dbReference type="PROSITE" id="PS50189">
    <property type="entry name" value="NTR"/>
    <property type="match status" value="1"/>
</dbReference>
<gene>
    <name type="primary">Ntn5</name>
    <name type="synonym">Gm484</name>
</gene>
<protein>
    <recommendedName>
        <fullName>Netrin-5</fullName>
    </recommendedName>
    <alternativeName>
        <fullName>Netrin-1-like protein</fullName>
    </alternativeName>
</protein>
<evidence type="ECO:0000250" key="1"/>
<evidence type="ECO:0000255" key="2"/>
<evidence type="ECO:0000255" key="3">
    <source>
        <dbReference type="PROSITE-ProRule" id="PRU00295"/>
    </source>
</evidence>
<evidence type="ECO:0000255" key="4">
    <source>
        <dbReference type="PROSITE-ProRule" id="PRU00460"/>
    </source>
</evidence>
<evidence type="ECO:0000269" key="5">
    <source>
    </source>
</evidence>
<evidence type="ECO:0000305" key="6"/>
<sequence length="452" mass="48837">MTDYRTLFSSPGAGSTVTTPITLSLLLLLSQATSDPCYDPGGRPRFCLPPVTQLVGKAAAPCSQTCALPAASPGPACNSSLTLDLDGSFLLTSVTLRFCTAGPPALVLSAAWATGGPWRPLWRRPAWPGALGGPKKVTFHSPPGPKTRIVASYLRVEFGGKAGLVTTGVRGRCQCHGHAARCATRAQPPRCRCRHHTTGPGCESCRPSHRDWPWRPATPQHPHPCLPCQCHPIGATGGMCNQTSGQCSCKLGVTGLTCNRCGPGYQQSRSPRMPCQRIPEATTTPATTPVASRSDPQCQGYCNVSVSSVHMSLQRYCQQDYVLHAQVSASSSQPSEAVGPEWWRLAVHVLAVFKQRAWPVRRGGQEAWVPRADLICGCLRLRPGADYLLLGRAAQTHDDDNYDPARLILNRHGLALPWRPRWARPLRRLQQKERGGACRGLLPPTRSPGPRN</sequence>
<organism>
    <name type="scientific">Mus musculus</name>
    <name type="common">Mouse</name>
    <dbReference type="NCBI Taxonomy" id="10090"/>
    <lineage>
        <taxon>Eukaryota</taxon>
        <taxon>Metazoa</taxon>
        <taxon>Chordata</taxon>
        <taxon>Craniata</taxon>
        <taxon>Vertebrata</taxon>
        <taxon>Euteleostomi</taxon>
        <taxon>Mammalia</taxon>
        <taxon>Eutheria</taxon>
        <taxon>Euarchontoglires</taxon>
        <taxon>Glires</taxon>
        <taxon>Rodentia</taxon>
        <taxon>Myomorpha</taxon>
        <taxon>Muroidea</taxon>
        <taxon>Muridae</taxon>
        <taxon>Murinae</taxon>
        <taxon>Mus</taxon>
        <taxon>Mus</taxon>
    </lineage>
</organism>